<comment type="function">
    <text>Involved in the presentation of foreign antigens to the immune system.</text>
</comment>
<comment type="subunit">
    <text>Heterodimer of an alpha chain and a beta chain (beta-2-microglobulin).</text>
</comment>
<comment type="subcellular location">
    <subcellularLocation>
        <location>Membrane</location>
        <topology>Single-pass type I membrane protein</topology>
    </subcellularLocation>
</comment>
<comment type="similarity">
    <text evidence="6">Belongs to the MHC class I family.</text>
</comment>
<name>1A04_GORGO</name>
<sequence length="365" mass="40896">MAVVAPRTLLLLLSGALALTQTWAGSHSMRYFSTSVSRPGRGEPRFIAVGYVDDTQFVRFDSDAASQRMEPRAPWMEQEEPEYWDRQTQISKTNAQIELESLRIALRYYNQSEDGSHTIQRMYGCDVGSDGRFLRGYQQDAYDGKDYIASNEDLRSWTAADMAAEITKRKWEAAHFAEQLRAYLEGTCVEWLRRYLENGKETLQRTDAPKTHTTHQAVSDHEATLKCWALSFYPAEITLTWQRDGEDQTQDTELVETRPAGDGTFQKWAAVVVPSGQEQRYTCHVQHEGLPKPLTLRWEPSSQPTIPIVGIIAGLVLFGAVIAGAVVAAVRWRRKSSDRKGGSYSQAASSDSAQGSDVSLTACKV</sequence>
<accession>P30378</accession>
<reference key="1">
    <citation type="journal article" date="1991" name="J. Exp. Med.">
        <title>Gorilla class I major histocompatibility complex alleles: comparison to human and chimpanzee class I.</title>
        <authorList>
            <person name="Lawlor D.A."/>
            <person name="Warren E."/>
            <person name="Taylor P."/>
            <person name="Parham P."/>
        </authorList>
    </citation>
    <scope>NUCLEOTIDE SEQUENCE [MRNA]</scope>
</reference>
<organism>
    <name type="scientific">Gorilla gorilla gorilla</name>
    <name type="common">Western lowland gorilla</name>
    <dbReference type="NCBI Taxonomy" id="9595"/>
    <lineage>
        <taxon>Eukaryota</taxon>
        <taxon>Metazoa</taxon>
        <taxon>Chordata</taxon>
        <taxon>Craniata</taxon>
        <taxon>Vertebrata</taxon>
        <taxon>Euteleostomi</taxon>
        <taxon>Mammalia</taxon>
        <taxon>Eutheria</taxon>
        <taxon>Euarchontoglires</taxon>
        <taxon>Primates</taxon>
        <taxon>Haplorrhini</taxon>
        <taxon>Catarrhini</taxon>
        <taxon>Hominidae</taxon>
        <taxon>Gorilla</taxon>
    </lineage>
</organism>
<proteinExistence type="evidence at transcript level"/>
<evidence type="ECO:0000250" key="1"/>
<evidence type="ECO:0000250" key="2">
    <source>
        <dbReference type="UniProtKB" id="P10314"/>
    </source>
</evidence>
<evidence type="ECO:0000255" key="3"/>
<evidence type="ECO:0000255" key="4">
    <source>
        <dbReference type="PROSITE-ProRule" id="PRU00114"/>
    </source>
</evidence>
<evidence type="ECO:0000256" key="5">
    <source>
        <dbReference type="SAM" id="MobiDB-lite"/>
    </source>
</evidence>
<evidence type="ECO:0000305" key="6"/>
<keyword id="KW-1015">Disulfide bond</keyword>
<keyword id="KW-0325">Glycoprotein</keyword>
<keyword id="KW-0391">Immunity</keyword>
<keyword id="KW-0472">Membrane</keyword>
<keyword id="KW-0490">MHC I</keyword>
<keyword id="KW-0597">Phosphoprotein</keyword>
<keyword id="KW-1185">Reference proteome</keyword>
<keyword id="KW-0732">Signal</keyword>
<keyword id="KW-0812">Transmembrane</keyword>
<keyword id="KW-1133">Transmembrane helix</keyword>
<feature type="signal peptide" evidence="1">
    <location>
        <begin position="1"/>
        <end position="24"/>
    </location>
</feature>
<feature type="chain" id="PRO_0000018900" description="Class I histocompatibility antigen, Gogo-A*0501 alpha chain">
    <location>
        <begin position="25"/>
        <end position="365"/>
    </location>
</feature>
<feature type="topological domain" description="Extracellular" evidence="3">
    <location>
        <begin position="25"/>
        <end position="308"/>
    </location>
</feature>
<feature type="transmembrane region" description="Helical" evidence="3">
    <location>
        <begin position="309"/>
        <end position="332"/>
    </location>
</feature>
<feature type="topological domain" description="Cytoplasmic" evidence="3">
    <location>
        <begin position="333"/>
        <end position="365"/>
    </location>
</feature>
<feature type="domain" description="Ig-like C1-type">
    <location>
        <begin position="209"/>
        <end position="295"/>
    </location>
</feature>
<feature type="region of interest" description="Alpha-1">
    <location>
        <begin position="25"/>
        <end position="114"/>
    </location>
</feature>
<feature type="region of interest" description="Alpha-2">
    <location>
        <begin position="115"/>
        <end position="206"/>
    </location>
</feature>
<feature type="region of interest" description="Alpha-3">
    <location>
        <begin position="207"/>
        <end position="298"/>
    </location>
</feature>
<feature type="region of interest" description="Connecting peptide">
    <location>
        <begin position="299"/>
        <end position="308"/>
    </location>
</feature>
<feature type="region of interest" description="Disordered" evidence="5">
    <location>
        <begin position="338"/>
        <end position="365"/>
    </location>
</feature>
<feature type="compositionally biased region" description="Low complexity" evidence="5">
    <location>
        <begin position="342"/>
        <end position="359"/>
    </location>
</feature>
<feature type="modified residue" description="Phosphoserine" evidence="2">
    <location>
        <position position="343"/>
    </location>
</feature>
<feature type="modified residue" description="Phosphotyrosine" evidence="2">
    <location>
        <position position="344"/>
    </location>
</feature>
<feature type="modified residue" description="Phosphoserine" evidence="2">
    <location>
        <position position="345"/>
    </location>
</feature>
<feature type="modified residue" description="Phosphoserine" evidence="2">
    <location>
        <position position="349"/>
    </location>
</feature>
<feature type="modified residue" description="Phosphoserine" evidence="2">
    <location>
        <position position="352"/>
    </location>
</feature>
<feature type="modified residue" description="Phosphoserine" evidence="2">
    <location>
        <position position="356"/>
    </location>
</feature>
<feature type="modified residue" description="Phosphoserine" evidence="2">
    <location>
        <position position="359"/>
    </location>
</feature>
<feature type="glycosylation site" description="N-linked (GlcNAc...) asparagine" evidence="1">
    <location>
        <position position="110"/>
    </location>
</feature>
<feature type="disulfide bond" evidence="4">
    <location>
        <begin position="125"/>
        <end position="188"/>
    </location>
</feature>
<feature type="disulfide bond" evidence="4">
    <location>
        <begin position="227"/>
        <end position="283"/>
    </location>
</feature>
<protein>
    <recommendedName>
        <fullName>Class I histocompatibility antigen, Gogo-A*0501 alpha chain</fullName>
    </recommendedName>
</protein>
<dbReference type="EMBL" id="X60256">
    <property type="protein sequence ID" value="CAA42808.1"/>
    <property type="molecule type" value="mRNA"/>
</dbReference>
<dbReference type="PIR" id="JH0537">
    <property type="entry name" value="JH0537"/>
</dbReference>
<dbReference type="RefSeq" id="NP_001266480.1">
    <property type="nucleotide sequence ID" value="NM_001279551.1"/>
</dbReference>
<dbReference type="SMR" id="P30378"/>
<dbReference type="GeneID" id="101141279"/>
<dbReference type="eggNOG" id="ENOG502RQEK">
    <property type="taxonomic scope" value="Eukaryota"/>
</dbReference>
<dbReference type="InParanoid" id="P30378"/>
<dbReference type="Proteomes" id="UP000001519">
    <property type="component" value="Unplaced"/>
</dbReference>
<dbReference type="GO" id="GO:0031901">
    <property type="term" value="C:early endosome membrane"/>
    <property type="evidence" value="ECO:0007669"/>
    <property type="project" value="UniProtKB-ARBA"/>
</dbReference>
<dbReference type="GO" id="GO:0012507">
    <property type="term" value="C:ER to Golgi transport vesicle membrane"/>
    <property type="evidence" value="ECO:0007669"/>
    <property type="project" value="UniProtKB-ARBA"/>
</dbReference>
<dbReference type="GO" id="GO:0009897">
    <property type="term" value="C:external side of plasma membrane"/>
    <property type="evidence" value="ECO:0000318"/>
    <property type="project" value="GO_Central"/>
</dbReference>
<dbReference type="GO" id="GO:0005615">
    <property type="term" value="C:extracellular space"/>
    <property type="evidence" value="ECO:0000318"/>
    <property type="project" value="GO_Central"/>
</dbReference>
<dbReference type="GO" id="GO:0098553">
    <property type="term" value="C:lumenal side of endoplasmic reticulum membrane"/>
    <property type="evidence" value="ECO:0007669"/>
    <property type="project" value="UniProtKB-ARBA"/>
</dbReference>
<dbReference type="GO" id="GO:0042612">
    <property type="term" value="C:MHC class I protein complex"/>
    <property type="evidence" value="ECO:0007669"/>
    <property type="project" value="UniProtKB-KW"/>
</dbReference>
<dbReference type="GO" id="GO:0030670">
    <property type="term" value="C:phagocytic vesicle membrane"/>
    <property type="evidence" value="ECO:0007669"/>
    <property type="project" value="UniProtKB-ARBA"/>
</dbReference>
<dbReference type="GO" id="GO:0055038">
    <property type="term" value="C:recycling endosome membrane"/>
    <property type="evidence" value="ECO:0007669"/>
    <property type="project" value="UniProtKB-ARBA"/>
</dbReference>
<dbReference type="GO" id="GO:0042605">
    <property type="term" value="F:peptide antigen binding"/>
    <property type="evidence" value="ECO:0000318"/>
    <property type="project" value="GO_Central"/>
</dbReference>
<dbReference type="GO" id="GO:0005102">
    <property type="term" value="F:signaling receptor binding"/>
    <property type="evidence" value="ECO:0000318"/>
    <property type="project" value="GO_Central"/>
</dbReference>
<dbReference type="GO" id="GO:0002486">
    <property type="term" value="P:antigen processing and presentation of endogenous peptide antigen via MHC class I via ER pathway, TAP-independent"/>
    <property type="evidence" value="ECO:0000318"/>
    <property type="project" value="GO_Central"/>
</dbReference>
<dbReference type="GO" id="GO:0002476">
    <property type="term" value="P:antigen processing and presentation of endogenous peptide antigen via MHC class Ib"/>
    <property type="evidence" value="ECO:0000318"/>
    <property type="project" value="GO_Central"/>
</dbReference>
<dbReference type="GO" id="GO:0006955">
    <property type="term" value="P:immune response"/>
    <property type="evidence" value="ECO:0000318"/>
    <property type="project" value="GO_Central"/>
</dbReference>
<dbReference type="GO" id="GO:0001916">
    <property type="term" value="P:positive regulation of T cell mediated cytotoxicity"/>
    <property type="evidence" value="ECO:0000318"/>
    <property type="project" value="GO_Central"/>
</dbReference>
<dbReference type="CDD" id="cd21027">
    <property type="entry name" value="IgC1_MHC_Ia_HLA-A"/>
    <property type="match status" value="1"/>
</dbReference>
<dbReference type="FunFam" id="2.60.40.10:FF:000014">
    <property type="entry name" value="H-2 class I histocompatibility antigen, alpha chain"/>
    <property type="match status" value="1"/>
</dbReference>
<dbReference type="FunFam" id="3.30.500.10:FF:000001">
    <property type="entry name" value="H-2 class I histocompatibility antigen, alpha chain"/>
    <property type="match status" value="1"/>
</dbReference>
<dbReference type="Gene3D" id="2.60.40.10">
    <property type="entry name" value="Immunoglobulins"/>
    <property type="match status" value="1"/>
</dbReference>
<dbReference type="Gene3D" id="3.30.500.10">
    <property type="entry name" value="MHC class I-like antigen recognition-like"/>
    <property type="match status" value="1"/>
</dbReference>
<dbReference type="InterPro" id="IPR007110">
    <property type="entry name" value="Ig-like_dom"/>
</dbReference>
<dbReference type="InterPro" id="IPR036179">
    <property type="entry name" value="Ig-like_dom_sf"/>
</dbReference>
<dbReference type="InterPro" id="IPR013783">
    <property type="entry name" value="Ig-like_fold"/>
</dbReference>
<dbReference type="InterPro" id="IPR003006">
    <property type="entry name" value="Ig/MHC_CS"/>
</dbReference>
<dbReference type="InterPro" id="IPR003597">
    <property type="entry name" value="Ig_C1-set"/>
</dbReference>
<dbReference type="InterPro" id="IPR050208">
    <property type="entry name" value="MHC_class-I_related"/>
</dbReference>
<dbReference type="InterPro" id="IPR011161">
    <property type="entry name" value="MHC_I-like_Ag-recog"/>
</dbReference>
<dbReference type="InterPro" id="IPR037055">
    <property type="entry name" value="MHC_I-like_Ag-recog_sf"/>
</dbReference>
<dbReference type="InterPro" id="IPR011162">
    <property type="entry name" value="MHC_I/II-like_Ag-recog"/>
</dbReference>
<dbReference type="InterPro" id="IPR001039">
    <property type="entry name" value="MHC_I_a_a1/a2"/>
</dbReference>
<dbReference type="InterPro" id="IPR010579">
    <property type="entry name" value="MHC_I_a_C"/>
</dbReference>
<dbReference type="PANTHER" id="PTHR16675:SF229">
    <property type="entry name" value="HLA CLASS I HISTOCOMPATIBILITY ANTIGEN, A ALPHA CHAIN"/>
    <property type="match status" value="1"/>
</dbReference>
<dbReference type="PANTHER" id="PTHR16675">
    <property type="entry name" value="MHC CLASS I-RELATED"/>
    <property type="match status" value="1"/>
</dbReference>
<dbReference type="Pfam" id="PF07654">
    <property type="entry name" value="C1-set"/>
    <property type="match status" value="1"/>
</dbReference>
<dbReference type="Pfam" id="PF00129">
    <property type="entry name" value="MHC_I"/>
    <property type="match status" value="1"/>
</dbReference>
<dbReference type="Pfam" id="PF06623">
    <property type="entry name" value="MHC_I_C"/>
    <property type="match status" value="1"/>
</dbReference>
<dbReference type="PRINTS" id="PR01638">
    <property type="entry name" value="MHCCLASSI"/>
</dbReference>
<dbReference type="SMART" id="SM00407">
    <property type="entry name" value="IGc1"/>
    <property type="match status" value="1"/>
</dbReference>
<dbReference type="SUPFAM" id="SSF48726">
    <property type="entry name" value="Immunoglobulin"/>
    <property type="match status" value="1"/>
</dbReference>
<dbReference type="SUPFAM" id="SSF54452">
    <property type="entry name" value="MHC antigen-recognition domain"/>
    <property type="match status" value="1"/>
</dbReference>
<dbReference type="PROSITE" id="PS50835">
    <property type="entry name" value="IG_LIKE"/>
    <property type="match status" value="1"/>
</dbReference>
<dbReference type="PROSITE" id="PS00290">
    <property type="entry name" value="IG_MHC"/>
    <property type="match status" value="1"/>
</dbReference>